<comment type="function">
    <text evidence="2">Component of the acetyl coenzyme A carboxylase (ACC) complex. Biotin carboxylase (BC) catalyzes the carboxylation of biotin on its carrier protein (BCCP) and then the CO(2) group is transferred by the transcarboxylase to acetyl-CoA to form malonyl-CoA.</text>
</comment>
<comment type="catalytic activity">
    <reaction evidence="2">
        <text>N(6)-carboxybiotinyl-L-lysyl-[protein] + acetyl-CoA = N(6)-biotinyl-L-lysyl-[protein] + malonyl-CoA</text>
        <dbReference type="Rhea" id="RHEA:54728"/>
        <dbReference type="Rhea" id="RHEA-COMP:10505"/>
        <dbReference type="Rhea" id="RHEA-COMP:10506"/>
        <dbReference type="ChEBI" id="CHEBI:57288"/>
        <dbReference type="ChEBI" id="CHEBI:57384"/>
        <dbReference type="ChEBI" id="CHEBI:83144"/>
        <dbReference type="ChEBI" id="CHEBI:83145"/>
        <dbReference type="EC" id="2.1.3.15"/>
    </reaction>
</comment>
<comment type="cofactor">
    <cofactor evidence="2">
        <name>Zn(2+)</name>
        <dbReference type="ChEBI" id="CHEBI:29105"/>
    </cofactor>
    <text evidence="2">Binds 1 zinc ion per subunit.</text>
</comment>
<comment type="pathway">
    <text evidence="2">Lipid metabolism; malonyl-CoA biosynthesis; malonyl-CoA from acetyl-CoA: step 1/1.</text>
</comment>
<comment type="subunit">
    <text evidence="1">Acetyl-CoA carboxylase is a heterohexamer composed of biotin carboxyl carrier protein, biotin carboxylase and 2 subunits each of ACCase subunit alpha and ACCase plastid-coded subunit beta (accD).</text>
</comment>
<comment type="subcellular location">
    <subcellularLocation>
        <location evidence="2">Plastid</location>
        <location evidence="2">Chloroplast stroma</location>
    </subcellularLocation>
</comment>
<comment type="similarity">
    <text evidence="2">Belongs to the AccD/PCCB family.</text>
</comment>
<gene>
    <name evidence="2" type="primary">accD</name>
</gene>
<keyword id="KW-0067">ATP-binding</keyword>
<keyword id="KW-0150">Chloroplast</keyword>
<keyword id="KW-0275">Fatty acid biosynthesis</keyword>
<keyword id="KW-0276">Fatty acid metabolism</keyword>
<keyword id="KW-0444">Lipid biosynthesis</keyword>
<keyword id="KW-0443">Lipid metabolism</keyword>
<keyword id="KW-0479">Metal-binding</keyword>
<keyword id="KW-0547">Nucleotide-binding</keyword>
<keyword id="KW-0934">Plastid</keyword>
<keyword id="KW-0808">Transferase</keyword>
<keyword id="KW-0862">Zinc</keyword>
<keyword id="KW-0863">Zinc-finger</keyword>
<organism>
    <name type="scientific">Nymphaea alba</name>
    <name type="common">White water-lily</name>
    <name type="synonym">Castalia alba</name>
    <dbReference type="NCBI Taxonomy" id="34301"/>
    <lineage>
        <taxon>Eukaryota</taxon>
        <taxon>Viridiplantae</taxon>
        <taxon>Streptophyta</taxon>
        <taxon>Embryophyta</taxon>
        <taxon>Tracheophyta</taxon>
        <taxon>Spermatophyta</taxon>
        <taxon>Magnoliopsida</taxon>
        <taxon>Nymphaeales</taxon>
        <taxon>Nymphaeaceae</taxon>
        <taxon>Nymphaea</taxon>
    </lineage>
</organism>
<name>ACCD_NYMAL</name>
<geneLocation type="chloroplast"/>
<dbReference type="EC" id="2.1.3.15" evidence="2"/>
<dbReference type="EMBL" id="AJ627251">
    <property type="protein sequence ID" value="CAF28602.1"/>
    <property type="molecule type" value="Genomic_DNA"/>
</dbReference>
<dbReference type="RefSeq" id="YP_053164.1">
    <property type="nucleotide sequence ID" value="NC_006050.1"/>
</dbReference>
<dbReference type="SMR" id="Q6EW70"/>
<dbReference type="GeneID" id="2896229"/>
<dbReference type="UniPathway" id="UPA00655">
    <property type="reaction ID" value="UER00711"/>
</dbReference>
<dbReference type="GO" id="GO:0009317">
    <property type="term" value="C:acetyl-CoA carboxylase complex"/>
    <property type="evidence" value="ECO:0007669"/>
    <property type="project" value="InterPro"/>
</dbReference>
<dbReference type="GO" id="GO:0009570">
    <property type="term" value="C:chloroplast stroma"/>
    <property type="evidence" value="ECO:0007669"/>
    <property type="project" value="UniProtKB-SubCell"/>
</dbReference>
<dbReference type="GO" id="GO:0003989">
    <property type="term" value="F:acetyl-CoA carboxylase activity"/>
    <property type="evidence" value="ECO:0007669"/>
    <property type="project" value="InterPro"/>
</dbReference>
<dbReference type="GO" id="GO:0005524">
    <property type="term" value="F:ATP binding"/>
    <property type="evidence" value="ECO:0007669"/>
    <property type="project" value="UniProtKB-KW"/>
</dbReference>
<dbReference type="GO" id="GO:0016743">
    <property type="term" value="F:carboxyl- or carbamoyltransferase activity"/>
    <property type="evidence" value="ECO:0007669"/>
    <property type="project" value="UniProtKB-UniRule"/>
</dbReference>
<dbReference type="GO" id="GO:0008270">
    <property type="term" value="F:zinc ion binding"/>
    <property type="evidence" value="ECO:0007669"/>
    <property type="project" value="UniProtKB-UniRule"/>
</dbReference>
<dbReference type="GO" id="GO:0006633">
    <property type="term" value="P:fatty acid biosynthetic process"/>
    <property type="evidence" value="ECO:0007669"/>
    <property type="project" value="UniProtKB-KW"/>
</dbReference>
<dbReference type="GO" id="GO:2001295">
    <property type="term" value="P:malonyl-CoA biosynthetic process"/>
    <property type="evidence" value="ECO:0007669"/>
    <property type="project" value="UniProtKB-UniRule"/>
</dbReference>
<dbReference type="Gene3D" id="3.90.226.10">
    <property type="entry name" value="2-enoyl-CoA Hydratase, Chain A, domain 1"/>
    <property type="match status" value="1"/>
</dbReference>
<dbReference type="HAMAP" id="MF_01395">
    <property type="entry name" value="AcetylCoA_CT_beta"/>
    <property type="match status" value="1"/>
</dbReference>
<dbReference type="InterPro" id="IPR034733">
    <property type="entry name" value="AcCoA_carboxyl_beta"/>
</dbReference>
<dbReference type="InterPro" id="IPR000438">
    <property type="entry name" value="Acetyl_CoA_COase_Trfase_b_su"/>
</dbReference>
<dbReference type="InterPro" id="IPR029045">
    <property type="entry name" value="ClpP/crotonase-like_dom_sf"/>
</dbReference>
<dbReference type="InterPro" id="IPR011762">
    <property type="entry name" value="COA_CT_N"/>
</dbReference>
<dbReference type="NCBIfam" id="TIGR00515">
    <property type="entry name" value="accD"/>
    <property type="match status" value="1"/>
</dbReference>
<dbReference type="PANTHER" id="PTHR42995">
    <property type="entry name" value="ACETYL-COENZYME A CARBOXYLASE CARBOXYL TRANSFERASE SUBUNIT BETA, CHLOROPLASTIC"/>
    <property type="match status" value="1"/>
</dbReference>
<dbReference type="PANTHER" id="PTHR42995:SF5">
    <property type="entry name" value="ACETYL-COENZYME A CARBOXYLASE CARBOXYL TRANSFERASE SUBUNIT BETA, CHLOROPLASTIC"/>
    <property type="match status" value="1"/>
</dbReference>
<dbReference type="Pfam" id="PF01039">
    <property type="entry name" value="Carboxyl_trans"/>
    <property type="match status" value="1"/>
</dbReference>
<dbReference type="PRINTS" id="PR01070">
    <property type="entry name" value="ACCCTRFRASEB"/>
</dbReference>
<dbReference type="SUPFAM" id="SSF52096">
    <property type="entry name" value="ClpP/crotonase"/>
    <property type="match status" value="1"/>
</dbReference>
<dbReference type="PROSITE" id="PS50980">
    <property type="entry name" value="COA_CT_NTER"/>
    <property type="match status" value="1"/>
</dbReference>
<proteinExistence type="inferred from homology"/>
<sequence length="486" mass="54622">MEKWWLNSMLSNEDLGRRCGLSASLGPIGNTSGSEEPIINDSEKNVNSWSGRGSYSCSNVDYLFNLGGVKDVWSLISGETFWVRDSNGDSYSIYFDIENKIFEIDTDSYFLGELESLFSSYLNLNNGSKSYNRYYDHYVYDTRHSWKSHINSCIDSYIRSETNMDSCIPNGSNNSSDNYIYSYICSDSERGSDRGSSNLKTSGVSDSDFGRHNDLDRNKRYRHLWVQCENCYGLNYKKFFSSKMNICEQCGYHLKMSSSDRIELLIDPGTWDPMDENMVSMDPIEFHSEEDPYRDRINSYQIETGLAEAVQTGIGKLNGIPIAIGVMDFKFMGGSMGSVVGEKITRLIEYATDRSLPVIMVCASGGARMQEGSLSLMQMAKISSALYNYQSNKKLFYVSILTSPTTGGVTASFGMLGDIIIAEPNAYIAFAGKRVIEQTLKKTVPEGSQVAEYLFNKGLFDPIVPRNLLKGVPSELFQFHGFFPRP</sequence>
<feature type="chain" id="PRO_0000359157" description="Acetyl-coenzyme A carboxylase carboxyl transferase subunit beta, chloroplastic">
    <location>
        <begin position="1"/>
        <end position="486"/>
    </location>
</feature>
<feature type="domain" description="CoA carboxyltransferase N-terminal" evidence="3">
    <location>
        <begin position="224"/>
        <end position="486"/>
    </location>
</feature>
<feature type="zinc finger region" description="C4-type" evidence="2">
    <location>
        <begin position="228"/>
        <end position="250"/>
    </location>
</feature>
<feature type="binding site" evidence="2">
    <location>
        <position position="228"/>
    </location>
    <ligand>
        <name>Zn(2+)</name>
        <dbReference type="ChEBI" id="CHEBI:29105"/>
    </ligand>
</feature>
<feature type="binding site" evidence="2">
    <location>
        <position position="231"/>
    </location>
    <ligand>
        <name>Zn(2+)</name>
        <dbReference type="ChEBI" id="CHEBI:29105"/>
    </ligand>
</feature>
<feature type="binding site" evidence="2">
    <location>
        <position position="247"/>
    </location>
    <ligand>
        <name>Zn(2+)</name>
        <dbReference type="ChEBI" id="CHEBI:29105"/>
    </ligand>
</feature>
<feature type="binding site" evidence="2">
    <location>
        <position position="250"/>
    </location>
    <ligand>
        <name>Zn(2+)</name>
        <dbReference type="ChEBI" id="CHEBI:29105"/>
    </ligand>
</feature>
<protein>
    <recommendedName>
        <fullName evidence="2">Acetyl-coenzyme A carboxylase carboxyl transferase subunit beta, chloroplastic</fullName>
        <shortName evidence="2">ACCase subunit beta</shortName>
        <shortName evidence="2">Acetyl-CoA carboxylase carboxyltransferase subunit beta</shortName>
        <ecNumber evidence="2">2.1.3.15</ecNumber>
    </recommendedName>
</protein>
<reference key="1">
    <citation type="journal article" date="2004" name="Mol. Biol. Evol.">
        <title>The chloroplast genome of Nymphaea alba: whole-genome analyses and the problem of identifying the most basal angiosperm.</title>
        <authorList>
            <person name="Goremykin V.V."/>
            <person name="Hirsch-Ernst K.I."/>
            <person name="Woelfl S."/>
            <person name="Hellwig F.H."/>
        </authorList>
    </citation>
    <scope>NUCLEOTIDE SEQUENCE [LARGE SCALE GENOMIC DNA]</scope>
</reference>
<accession>Q6EW70</accession>
<evidence type="ECO:0000250" key="1"/>
<evidence type="ECO:0000255" key="2">
    <source>
        <dbReference type="HAMAP-Rule" id="MF_01395"/>
    </source>
</evidence>
<evidence type="ECO:0000255" key="3">
    <source>
        <dbReference type="PROSITE-ProRule" id="PRU01136"/>
    </source>
</evidence>